<dbReference type="EMBL" id="L11582">
    <property type="protein sequence ID" value="AAA03015.1"/>
    <property type="molecule type" value="Unassigned_RNA"/>
</dbReference>
<dbReference type="SMR" id="P35655"/>
<dbReference type="GO" id="GO:0005886">
    <property type="term" value="C:plasma membrane"/>
    <property type="evidence" value="ECO:0007669"/>
    <property type="project" value="UniProtKB-SubCell"/>
</dbReference>
<dbReference type="GO" id="GO:0009306">
    <property type="term" value="P:protein secretion"/>
    <property type="evidence" value="ECO:0007669"/>
    <property type="project" value="InterPro"/>
</dbReference>
<dbReference type="GO" id="GO:0052040">
    <property type="term" value="P:symbiont-mediated perturbation of host programmed cell death"/>
    <property type="evidence" value="ECO:0007669"/>
    <property type="project" value="UniProtKB-KW"/>
</dbReference>
<dbReference type="Gene3D" id="3.40.30.60">
    <property type="entry name" value="FHIPEP family, domain 1"/>
    <property type="match status" value="1"/>
</dbReference>
<dbReference type="Gene3D" id="1.10.8.540">
    <property type="entry name" value="FHIPEP family, domain 3"/>
    <property type="match status" value="1"/>
</dbReference>
<dbReference type="Gene3D" id="3.40.50.12790">
    <property type="entry name" value="FHIPEP family, domain 4"/>
    <property type="match status" value="1"/>
</dbReference>
<dbReference type="InterPro" id="IPR042194">
    <property type="entry name" value="FHIPEP_1"/>
</dbReference>
<dbReference type="InterPro" id="IPR042193">
    <property type="entry name" value="FHIPEP_3"/>
</dbReference>
<dbReference type="InterPro" id="IPR042196">
    <property type="entry name" value="FHIPEP_4"/>
</dbReference>
<dbReference type="InterPro" id="IPR025505">
    <property type="entry name" value="FHIPEP_CS"/>
</dbReference>
<dbReference type="InterPro" id="IPR001712">
    <property type="entry name" value="T3SS_FHIPEP"/>
</dbReference>
<dbReference type="InterPro" id="IPR006302">
    <property type="entry name" value="T3SS_HrcV"/>
</dbReference>
<dbReference type="NCBIfam" id="TIGR01399">
    <property type="entry name" value="hrcV"/>
    <property type="match status" value="1"/>
</dbReference>
<dbReference type="PANTHER" id="PTHR30161">
    <property type="entry name" value="FLAGELLAR EXPORT PROTEIN, MEMBRANE FLHA SUBUNIT-RELATED"/>
    <property type="match status" value="1"/>
</dbReference>
<dbReference type="PANTHER" id="PTHR30161:SF2">
    <property type="entry name" value="INVASION PROTEIN INVA"/>
    <property type="match status" value="1"/>
</dbReference>
<dbReference type="Pfam" id="PF00771">
    <property type="entry name" value="FHIPEP"/>
    <property type="match status" value="1"/>
</dbReference>
<dbReference type="PIRSF" id="PIRSF005419">
    <property type="entry name" value="FlhA"/>
    <property type="match status" value="1"/>
</dbReference>
<dbReference type="PRINTS" id="PR00949">
    <property type="entry name" value="TYPE3IMAPROT"/>
</dbReference>
<dbReference type="PROSITE" id="PS00994">
    <property type="entry name" value="FHIPEP"/>
    <property type="match status" value="1"/>
</dbReference>
<comment type="function">
    <text>Involved in the secretion of harpin-pss; a proteinaceous elicitor of the hypersensitivity response in plants.</text>
</comment>
<comment type="subcellular location">
    <subcellularLocation>
        <location evidence="2">Cell inner membrane</location>
        <topology evidence="2">Multi-pass membrane protein</topology>
    </subcellularLocation>
</comment>
<comment type="similarity">
    <text evidence="2">Belongs to the FHIPEP (flagella/HR/invasion proteins export pore) family.</text>
</comment>
<reference key="1">
    <citation type="journal article" date="1993" name="Mol. Plant Microbe Interact.">
        <title>Characterization of the Pseudomonas syringae pv. syringae 61 hrpJ and hrpI genes: homology of HrpI to a superfamily of proteins associated with protein translocation.</title>
        <authorList>
            <person name="Huang H.-C."/>
            <person name="Xiao Y."/>
            <person name="Lin R.-H."/>
            <person name="Lu Y."/>
            <person name="Hutcheson S.W."/>
            <person name="Collmer A."/>
        </authorList>
    </citation>
    <scope>NUCLEOTIDE SEQUENCE [GENOMIC DNA]</scope>
    <source>
        <strain>Pss61</strain>
    </source>
</reference>
<keyword id="KW-0997">Cell inner membrane</keyword>
<keyword id="KW-1003">Cell membrane</keyword>
<keyword id="KW-0928">Hypersensitive response elicitation</keyword>
<keyword id="KW-0472">Membrane</keyword>
<keyword id="KW-0653">Protein transport</keyword>
<keyword id="KW-0812">Transmembrane</keyword>
<keyword id="KW-1133">Transmembrane helix</keyword>
<keyword id="KW-0813">Transport</keyword>
<feature type="chain" id="PRO_0000190025" description="Hypersensitivity response secretion protein HrpI">
    <location>
        <begin position="1"/>
        <end position="695"/>
    </location>
</feature>
<feature type="transmembrane region" description="Helical" evidence="1">
    <location>
        <begin position="21"/>
        <end position="38"/>
    </location>
</feature>
<feature type="transmembrane region" description="Helical" evidence="1">
    <location>
        <begin position="45"/>
        <end position="61"/>
    </location>
</feature>
<feature type="transmembrane region" description="Helical" evidence="1">
    <location>
        <begin position="68"/>
        <end position="92"/>
    </location>
</feature>
<feature type="transmembrane region" description="Helical" evidence="1">
    <location>
        <begin position="111"/>
        <end position="135"/>
    </location>
</feature>
<feature type="transmembrane region" description="Helical" evidence="1">
    <location>
        <begin position="203"/>
        <end position="223"/>
    </location>
</feature>
<feature type="transmembrane region" description="Helical" evidence="1">
    <location>
        <begin position="244"/>
        <end position="262"/>
    </location>
</feature>
<feature type="transmembrane region" description="Helical" evidence="1">
    <location>
        <begin position="311"/>
        <end position="327"/>
    </location>
</feature>
<accession>P35655</accession>
<protein>
    <recommendedName>
        <fullName>Hypersensitivity response secretion protein HrpI</fullName>
    </recommendedName>
</protein>
<name>HRPI_PSESY</name>
<evidence type="ECO:0000255" key="1"/>
<evidence type="ECO:0000305" key="2"/>
<proteinExistence type="inferred from homology"/>
<organism>
    <name type="scientific">Pseudomonas syringae pv. syringae</name>
    <dbReference type="NCBI Taxonomy" id="321"/>
    <lineage>
        <taxon>Bacteria</taxon>
        <taxon>Pseudomonadati</taxon>
        <taxon>Pseudomonadota</taxon>
        <taxon>Gammaproteobacteria</taxon>
        <taxon>Pseudomonadales</taxon>
        <taxon>Pseudomonadaceae</taxon>
        <taxon>Pseudomonas</taxon>
        <taxon>Pseudomonas syringae</taxon>
    </lineage>
</organism>
<sequence length="695" mass="76482">MNRVINFLNMVALSAMRRSELVGAFFVIAIVFMMITPLPTGLIDVLIAVNICISCLLIMLAMHLPRPLAFSTFPAVLLLTTMFRLALSVSTTRLILLNQDAGHIVEAFGQFVVGGNLAVGLVIFLILTVVNFLVITKGSERVAEVGARFTLDAMPGKQMSIDSDLRANLITVHEARKRRAELNKESQLFGAMDGAMKFVNGDAIASLIIVAINMIGGISIGVLQHNMAAGDALQLYTVLTIGDGLIAQIPALLISVTSGMIITRVPNTEAGVEANIGREIAEQITSQPKAWIIASVAMLGFAALPGMPTGVFITIAIICGAGGLLQLQRAKPKADEQRTAAVAPEMNGKEDLRTFSPSRQFVLQFHPGQDSAQIEALVSEIRKRRNRLVVQYGLTLPSFIIEHVDDIAPDEFRFTVYDVPMLKATFTQSHVAVEARQLEGENLPAAIPGNTDRQEDQWVWLPAEQSGELNPVSSTTLIIERMERALQSCAPQFIGLQETKAILSWLESEQPELAQEMQRVLTLTRFSAVLQRLASECVPLRAIRVIAETLIEHCQHERDTNVLTDYVRIALKSQIYHQYCGAEGLQVWLVTPESEGLLRDGLRQTQTETFFALSNETSQMLVQQLHIAFPVRAPEQAVLLVAQDLRSPLRTLLREEFYHVPVLSFAEISNAAKVKVMGRFDLEDDLEPLDNEHAA</sequence>
<gene>
    <name type="primary">hrpI</name>
</gene>